<name>RAB1B_RAT</name>
<accession>P10536</accession>
<gene>
    <name type="primary">Rab1b</name>
</gene>
<comment type="function">
    <text evidence="3 7 8">The small GTPases Rab are key regulators of intracellular membrane trafficking, from the formation of transport vesicles to their fusion with membranes. Rabs cycle between an inactive GDP-bound form and an active GTP-bound form that is able to recruit to membranes different set of downstream effectors directly responsible for vesicle formation, movement, tethering and fusion (By similarity). Plays a role in the initial events of the autophagic vacuole development which take place at specialized regions of the endoplasmic reticulum (By similarity). Regulates vesicular transport between the endoplasmic reticulum and successive Golgi compartments (PubMed:1918138). Required to modulate the compacted morphology of the Golgi. Promotes the recruitment of lipid phosphatase MTMR6 to the endoplasmic reticulum-Golgi intermediate compartment (PubMed:23188820).</text>
</comment>
<comment type="catalytic activity">
    <reaction evidence="1">
        <text>GTP + H2O = GDP + phosphate + H(+)</text>
        <dbReference type="Rhea" id="RHEA:19669"/>
        <dbReference type="ChEBI" id="CHEBI:15377"/>
        <dbReference type="ChEBI" id="CHEBI:15378"/>
        <dbReference type="ChEBI" id="CHEBI:37565"/>
        <dbReference type="ChEBI" id="CHEBI:43474"/>
        <dbReference type="ChEBI" id="CHEBI:58189"/>
        <dbReference type="EC" id="3.6.5.2"/>
    </reaction>
    <physiologicalReaction direction="left-to-right" evidence="1">
        <dbReference type="Rhea" id="RHEA:19670"/>
    </physiologicalReaction>
</comment>
<comment type="cofactor">
    <cofactor evidence="3">
        <name>Mg(2+)</name>
        <dbReference type="ChEBI" id="CHEBI:18420"/>
    </cofactor>
</comment>
<comment type="activity regulation">
    <text evidence="3">Regulated by guanine nucleotide exchange factors (GEFs) which promote the exchange of bound GDP for free GTP. Regulated by GTPase activating proteins (GAPs) including TBC1D20 which increases the GTP hydrolysis activity. Inhibited by GDP dissociation inhibitors (GDIs).</text>
</comment>
<comment type="subunit">
    <text evidence="2 3">Interacts with MICAL1 and MICAL2. Interacts (in GTP-bound form) with MICALCL, MICAL1 and MILCAL3. Interacts with GDI1; the interaction requires the GDP-bound state. Interacts with CHM/REP1; the interaction requires the GDP-bound form and is necessary for prenylation by GGTase II. Interacts with RabGAP TBC1D20. Interacts (in GDP-bound form) with lipid phosphatase MTMR6 (via GRAM domain); the interaction regulates MTMR6 recruitment to the endoplasmic reticulum-Golgi intermediate compartment (By similarity). Interacts (in GDP-bound form) with lipid phosphatase MTMR7 (By similarity).</text>
</comment>
<comment type="subcellular location">
    <subcellularLocation>
        <location evidence="7 8">Cytoplasm</location>
    </subcellularLocation>
    <subcellularLocation>
        <location evidence="7">Membrane</location>
        <topology evidence="7">Lipid-anchor</topology>
        <orientation evidence="7">Cytoplasmic side</orientation>
    </subcellularLocation>
    <subcellularLocation>
        <location evidence="3">Preautophagosomal structure membrane</location>
        <topology evidence="10">Lipid-anchor</topology>
        <orientation evidence="10">Cytoplasmic side</orientation>
    </subcellularLocation>
    <subcellularLocation>
        <location evidence="8">Cytoplasm</location>
        <location evidence="8">Perinuclear region</location>
    </subcellularLocation>
    <text evidence="3 8">Targeted by REP1 to membranes of specific subcellular compartments including endoplasmic reticulum, Golgi apparatus, and intermediate vesicles between these two compartments. In the GDP-form, colocalizes with GDI in the cytoplasm (By similarity). Co-localizes with MTMR6 to the endoplasmic reticulum-Golgi intermediate compartment and to the peri-Golgi region (PubMed:23188820).</text>
</comment>
<comment type="domain">
    <text evidence="3">Switch 1, switch 2 and the interswitch regions are characteristic of Rab GTPases and mediate the interactions with Rab downstream effectors. The switch regions undergo conformational changes upon nucleotide binding which drives interaction with specific sets of effector proteins, with most effectors only binding to GTP-bound Rab.</text>
</comment>
<comment type="PTM">
    <text evidence="3">Prenylated; by GGTase II, only after interaction of the substrate with Rab escort protein 1 (REP1).</text>
</comment>
<comment type="miscellaneous">
    <text evidence="3">Rab-1B binds GTP and GDP and possesses intrinsic GTPase activity.</text>
</comment>
<comment type="similarity">
    <text evidence="10">Belongs to the small GTPase superfamily. Rab family.</text>
</comment>
<reference key="1">
    <citation type="journal article" date="1989" name="Nucleic Acids Res.">
        <title>Nucleotide sequence of a rat cDNA: rab1B, encoding a rab1-YPT related protein.</title>
        <authorList>
            <person name="Zahraoui A."/>
            <person name="Touchot N."/>
            <person name="Chardin P."/>
            <person name="Tavitian A."/>
        </authorList>
    </citation>
    <scope>NUCLEOTIDE SEQUENCE [MRNA]</scope>
</reference>
<reference key="2">
    <citation type="journal article" date="1989" name="FEBS Lett.">
        <title>Biochemical properties of the YPT-related rab1B protein. Comparison with rab1A.</title>
        <authorList>
            <person name="Touchot N."/>
            <person name="Zahraoui A."/>
            <person name="Vielh E."/>
            <person name="Tavitian A."/>
        </authorList>
    </citation>
    <scope>CHARACTERIZATION</scope>
    <scope>MUTAGENESIS OF LYS-21 AND ALA-65</scope>
</reference>
<reference key="3">
    <citation type="journal article" date="1991" name="J. Cell Biol.">
        <title>Rab1b regulates vesicular transport between the endoplasmic reticulum and successive Golgi compartments.</title>
        <authorList>
            <person name="Plutner H."/>
            <person name="Cox A.D."/>
            <person name="Pind S."/>
            <person name="Khosravi-Far R."/>
            <person name="Bourne J.R."/>
            <person name="Schwaninger R."/>
            <person name="Der C.J."/>
            <person name="Balch W.E."/>
        </authorList>
    </citation>
    <scope>SUBCELLULAR LOCATION</scope>
    <scope>FUNCTION</scope>
</reference>
<reference key="4">
    <citation type="journal article" date="1991" name="Proc. Natl. Acad. Sci. U.S.A.">
        <title>Isoprenoid modification of rab proteins terminating in CC or CXC motifs.</title>
        <authorList>
            <person name="Khosravi-Far R."/>
            <person name="Lutz R.J."/>
            <person name="Cox A.D."/>
            <person name="Conroy L."/>
            <person name="Bourne J.R."/>
            <person name="Sinensky M."/>
            <person name="Balch W.E."/>
            <person name="Buss J.E."/>
            <person name="Der C.J."/>
        </authorList>
    </citation>
    <scope>ISOPRENYLATION AT CYS-200 AND CYS-201</scope>
</reference>
<reference key="5">
    <citation type="journal article" date="2013" name="J. Biol. Chem.">
        <title>Phosphatidylinositol 3-phosphatase myotubularin-related protein 6 (MTMR6) is regulated by small GTPase Rab1B in the early secretory and autophagic pathways.</title>
        <authorList>
            <person name="Mochizuki Y."/>
            <person name="Ohashi R."/>
            <person name="Kawamura T."/>
            <person name="Iwanari H."/>
            <person name="Kodama T."/>
            <person name="Naito M."/>
            <person name="Hamakubo T."/>
        </authorList>
    </citation>
    <scope>FUNCTION</scope>
    <scope>SUBCELLULAR LOCATION</scope>
</reference>
<evidence type="ECO:0000250" key="1">
    <source>
        <dbReference type="UniProtKB" id="P62820"/>
    </source>
</evidence>
<evidence type="ECO:0000250" key="2">
    <source>
        <dbReference type="UniProtKB" id="Q9D1G1"/>
    </source>
</evidence>
<evidence type="ECO:0000250" key="3">
    <source>
        <dbReference type="UniProtKB" id="Q9H0U4"/>
    </source>
</evidence>
<evidence type="ECO:0000255" key="4"/>
<evidence type="ECO:0000256" key="5">
    <source>
        <dbReference type="SAM" id="MobiDB-lite"/>
    </source>
</evidence>
<evidence type="ECO:0000269" key="6">
    <source>
    </source>
</evidence>
<evidence type="ECO:0000269" key="7">
    <source>
    </source>
</evidence>
<evidence type="ECO:0000269" key="8">
    <source>
    </source>
</evidence>
<evidence type="ECO:0000269" key="9">
    <source>
    </source>
</evidence>
<evidence type="ECO:0000305" key="10"/>
<keyword id="KW-0007">Acetylation</keyword>
<keyword id="KW-0072">Autophagy</keyword>
<keyword id="KW-0963">Cytoplasm</keyword>
<keyword id="KW-0342">GTP-binding</keyword>
<keyword id="KW-0378">Hydrolase</keyword>
<keyword id="KW-0449">Lipoprotein</keyword>
<keyword id="KW-0460">Magnesium</keyword>
<keyword id="KW-0472">Membrane</keyword>
<keyword id="KW-0479">Metal-binding</keyword>
<keyword id="KW-0488">Methylation</keyword>
<keyword id="KW-0547">Nucleotide-binding</keyword>
<keyword id="KW-0597">Phosphoprotein</keyword>
<keyword id="KW-0636">Prenylation</keyword>
<keyword id="KW-0653">Protein transport</keyword>
<keyword id="KW-1185">Reference proteome</keyword>
<keyword id="KW-0813">Transport</keyword>
<dbReference type="EC" id="3.6.5.2" evidence="1"/>
<dbReference type="EMBL" id="X13905">
    <property type="protein sequence ID" value="CAA32105.1"/>
    <property type="molecule type" value="mRNA"/>
</dbReference>
<dbReference type="PIR" id="S06147">
    <property type="entry name" value="S06147"/>
</dbReference>
<dbReference type="SMR" id="P10536"/>
<dbReference type="FunCoup" id="P10536">
    <property type="interactions" value="2476"/>
</dbReference>
<dbReference type="IntAct" id="P10536">
    <property type="interactions" value="2"/>
</dbReference>
<dbReference type="MINT" id="P10536"/>
<dbReference type="STRING" id="10116.ENSRNOP00000067788"/>
<dbReference type="GlyGen" id="P10536">
    <property type="glycosylation" value="1 site, 1 O-linked glycan (1 site)"/>
</dbReference>
<dbReference type="iPTMnet" id="P10536"/>
<dbReference type="PhosphoSitePlus" id="P10536"/>
<dbReference type="SwissPalm" id="P10536"/>
<dbReference type="jPOST" id="P10536"/>
<dbReference type="PaxDb" id="10116-ENSRNOP00000067788"/>
<dbReference type="AGR" id="RGD:1642882"/>
<dbReference type="AGR" id="RGD:619736"/>
<dbReference type="RGD" id="1642882">
    <property type="gene designation" value="Rab1b"/>
</dbReference>
<dbReference type="eggNOG" id="KOG0084">
    <property type="taxonomic scope" value="Eukaryota"/>
</dbReference>
<dbReference type="InParanoid" id="P10536"/>
<dbReference type="PhylomeDB" id="P10536"/>
<dbReference type="Reactome" id="R-RNO-162658">
    <property type="pathway name" value="Golgi Cisternae Pericentriolar Stack Reorganization"/>
</dbReference>
<dbReference type="Reactome" id="R-RNO-204005">
    <property type="pathway name" value="COPII-mediated vesicle transport"/>
</dbReference>
<dbReference type="Reactome" id="R-RNO-6807878">
    <property type="pathway name" value="COPI-mediated anterograde transport"/>
</dbReference>
<dbReference type="Reactome" id="R-RNO-6811434">
    <property type="pathway name" value="COPI-dependent Golgi-to-ER retrograde traffic"/>
</dbReference>
<dbReference type="Reactome" id="R-RNO-8873719">
    <property type="pathway name" value="RAB geranylgeranylation"/>
</dbReference>
<dbReference type="Reactome" id="R-RNO-8876198">
    <property type="pathway name" value="RAB GEFs exchange GTP for GDP on RABs"/>
</dbReference>
<dbReference type="PRO" id="PR:P10536"/>
<dbReference type="Proteomes" id="UP000002494">
    <property type="component" value="Unplaced"/>
</dbReference>
<dbReference type="GO" id="GO:0012505">
    <property type="term" value="C:endomembrane system"/>
    <property type="evidence" value="ECO:0000318"/>
    <property type="project" value="GO_Central"/>
</dbReference>
<dbReference type="GO" id="GO:0005793">
    <property type="term" value="C:endoplasmic reticulum-Golgi intermediate compartment"/>
    <property type="evidence" value="ECO:0000266"/>
    <property type="project" value="RGD"/>
</dbReference>
<dbReference type="GO" id="GO:0048471">
    <property type="term" value="C:perinuclear region of cytoplasm"/>
    <property type="evidence" value="ECO:0007669"/>
    <property type="project" value="UniProtKB-SubCell"/>
</dbReference>
<dbReference type="GO" id="GO:0034045">
    <property type="term" value="C:phagophore assembly site membrane"/>
    <property type="evidence" value="ECO:0000266"/>
    <property type="project" value="RGD"/>
</dbReference>
<dbReference type="GO" id="GO:0045202">
    <property type="term" value="C:synapse"/>
    <property type="evidence" value="ECO:0000314"/>
    <property type="project" value="SynGO"/>
</dbReference>
<dbReference type="GO" id="GO:0003925">
    <property type="term" value="F:G protein activity"/>
    <property type="evidence" value="ECO:0007669"/>
    <property type="project" value="UniProtKB-EC"/>
</dbReference>
<dbReference type="GO" id="GO:0005525">
    <property type="term" value="F:GTP binding"/>
    <property type="evidence" value="ECO:0000250"/>
    <property type="project" value="UniProtKB"/>
</dbReference>
<dbReference type="GO" id="GO:0003924">
    <property type="term" value="F:GTPase activity"/>
    <property type="evidence" value="ECO:0000318"/>
    <property type="project" value="GO_Central"/>
</dbReference>
<dbReference type="GO" id="GO:0000045">
    <property type="term" value="P:autophagosome assembly"/>
    <property type="evidence" value="ECO:0000318"/>
    <property type="project" value="GO_Central"/>
</dbReference>
<dbReference type="GO" id="GO:0006888">
    <property type="term" value="P:endoplasmic reticulum to Golgi vesicle-mediated transport"/>
    <property type="evidence" value="ECO:0000266"/>
    <property type="project" value="RGD"/>
</dbReference>
<dbReference type="GO" id="GO:0007030">
    <property type="term" value="P:Golgi organization"/>
    <property type="evidence" value="ECO:0000250"/>
    <property type="project" value="UniProtKB"/>
</dbReference>
<dbReference type="GO" id="GO:0006886">
    <property type="term" value="P:intracellular protein transport"/>
    <property type="evidence" value="ECO:0000318"/>
    <property type="project" value="GO_Central"/>
</dbReference>
<dbReference type="GO" id="GO:1903020">
    <property type="term" value="P:positive regulation of glycoprotein metabolic process"/>
    <property type="evidence" value="ECO:0000266"/>
    <property type="project" value="RGD"/>
</dbReference>
<dbReference type="GO" id="GO:2000785">
    <property type="term" value="P:regulation of autophagosome assembly"/>
    <property type="evidence" value="ECO:0000266"/>
    <property type="project" value="RGD"/>
</dbReference>
<dbReference type="CDD" id="cd01869">
    <property type="entry name" value="Rab1_Ypt1"/>
    <property type="match status" value="1"/>
</dbReference>
<dbReference type="FunFam" id="3.40.50.300:FF:000069">
    <property type="entry name" value="Ras GTP-binding protein YPT1"/>
    <property type="match status" value="1"/>
</dbReference>
<dbReference type="Gene3D" id="3.40.50.300">
    <property type="entry name" value="P-loop containing nucleotide triphosphate hydrolases"/>
    <property type="match status" value="1"/>
</dbReference>
<dbReference type="InterPro" id="IPR027417">
    <property type="entry name" value="P-loop_NTPase"/>
</dbReference>
<dbReference type="InterPro" id="IPR050227">
    <property type="entry name" value="Rab"/>
</dbReference>
<dbReference type="InterPro" id="IPR005225">
    <property type="entry name" value="Small_GTP-bd"/>
</dbReference>
<dbReference type="InterPro" id="IPR001806">
    <property type="entry name" value="Small_GTPase"/>
</dbReference>
<dbReference type="NCBIfam" id="TIGR00231">
    <property type="entry name" value="small_GTP"/>
    <property type="match status" value="1"/>
</dbReference>
<dbReference type="PANTHER" id="PTHR47977">
    <property type="entry name" value="RAS-RELATED PROTEIN RAB"/>
    <property type="match status" value="1"/>
</dbReference>
<dbReference type="Pfam" id="PF00071">
    <property type="entry name" value="Ras"/>
    <property type="match status" value="1"/>
</dbReference>
<dbReference type="PRINTS" id="PR00449">
    <property type="entry name" value="RASTRNSFRMNG"/>
</dbReference>
<dbReference type="SMART" id="SM00177">
    <property type="entry name" value="ARF"/>
    <property type="match status" value="1"/>
</dbReference>
<dbReference type="SMART" id="SM00175">
    <property type="entry name" value="RAB"/>
    <property type="match status" value="1"/>
</dbReference>
<dbReference type="SMART" id="SM00176">
    <property type="entry name" value="RAN"/>
    <property type="match status" value="1"/>
</dbReference>
<dbReference type="SMART" id="SM00173">
    <property type="entry name" value="RAS"/>
    <property type="match status" value="1"/>
</dbReference>
<dbReference type="SMART" id="SM00174">
    <property type="entry name" value="RHO"/>
    <property type="match status" value="1"/>
</dbReference>
<dbReference type="SUPFAM" id="SSF52540">
    <property type="entry name" value="P-loop containing nucleoside triphosphate hydrolases"/>
    <property type="match status" value="1"/>
</dbReference>
<dbReference type="PROSITE" id="PS51419">
    <property type="entry name" value="RAB"/>
    <property type="match status" value="1"/>
</dbReference>
<proteinExistence type="evidence at protein level"/>
<feature type="chain" id="PRO_0000121063" description="Ras-related protein Rab-1B">
    <location>
        <begin position="1"/>
        <end position="201"/>
    </location>
</feature>
<feature type="region of interest" description="Switch 2 region; required for interaction with REP1/CHM" evidence="3">
    <location>
        <begin position="64"/>
        <end position="83"/>
    </location>
</feature>
<feature type="region of interest" description="Disordered" evidence="5">
    <location>
        <begin position="173"/>
        <end position="201"/>
    </location>
</feature>
<feature type="short sequence motif" description="Switch 1" evidence="3">
    <location>
        <begin position="30"/>
        <end position="45"/>
    </location>
</feature>
<feature type="short sequence motif" description="Switch 2" evidence="3">
    <location>
        <begin position="65"/>
        <end position="80"/>
    </location>
</feature>
<feature type="binding site" evidence="3">
    <location>
        <position position="17"/>
    </location>
    <ligand>
        <name>GTP</name>
        <dbReference type="ChEBI" id="CHEBI:37565"/>
    </ligand>
</feature>
<feature type="binding site" evidence="3">
    <location>
        <position position="18"/>
    </location>
    <ligand>
        <name>GTP</name>
        <dbReference type="ChEBI" id="CHEBI:37565"/>
    </ligand>
</feature>
<feature type="binding site" evidence="3">
    <location>
        <position position="19"/>
    </location>
    <ligand>
        <name>GTP</name>
        <dbReference type="ChEBI" id="CHEBI:37565"/>
    </ligand>
</feature>
<feature type="binding site" evidence="3">
    <location>
        <position position="20"/>
    </location>
    <ligand>
        <name>GTP</name>
        <dbReference type="ChEBI" id="CHEBI:37565"/>
    </ligand>
</feature>
<feature type="binding site" evidence="3">
    <location>
        <position position="21"/>
    </location>
    <ligand>
        <name>GTP</name>
        <dbReference type="ChEBI" id="CHEBI:37565"/>
    </ligand>
</feature>
<feature type="binding site" evidence="3">
    <location>
        <position position="22"/>
    </location>
    <ligand>
        <name>GTP</name>
        <dbReference type="ChEBI" id="CHEBI:37565"/>
    </ligand>
</feature>
<feature type="binding site" evidence="3">
    <location>
        <position position="22"/>
    </location>
    <ligand>
        <name>Mg(2+)</name>
        <dbReference type="ChEBI" id="CHEBI:18420"/>
    </ligand>
</feature>
<feature type="binding site" evidence="3">
    <location>
        <position position="23"/>
    </location>
    <ligand>
        <name>GTP</name>
        <dbReference type="ChEBI" id="CHEBI:37565"/>
    </ligand>
</feature>
<feature type="binding site" evidence="3">
    <location>
        <position position="33"/>
    </location>
    <ligand>
        <name>GTP</name>
        <dbReference type="ChEBI" id="CHEBI:37565"/>
    </ligand>
</feature>
<feature type="binding site" evidence="3">
    <location>
        <position position="34"/>
    </location>
    <ligand>
        <name>GTP</name>
        <dbReference type="ChEBI" id="CHEBI:37565"/>
    </ligand>
</feature>
<feature type="binding site" evidence="3">
    <location>
        <position position="35"/>
    </location>
    <ligand>
        <name>GTP</name>
        <dbReference type="ChEBI" id="CHEBI:37565"/>
    </ligand>
</feature>
<feature type="binding site" evidence="3">
    <location>
        <position position="36"/>
    </location>
    <ligand>
        <name>GTP</name>
        <dbReference type="ChEBI" id="CHEBI:37565"/>
    </ligand>
</feature>
<feature type="binding site" evidence="3">
    <location>
        <position position="39"/>
    </location>
    <ligand>
        <name>GTP</name>
        <dbReference type="ChEBI" id="CHEBI:37565"/>
    </ligand>
</feature>
<feature type="binding site" evidence="3">
    <location>
        <position position="40"/>
    </location>
    <ligand>
        <name>GTP</name>
        <dbReference type="ChEBI" id="CHEBI:37565"/>
    </ligand>
</feature>
<feature type="binding site" evidence="3">
    <location>
        <position position="40"/>
    </location>
    <ligand>
        <name>Mg(2+)</name>
        <dbReference type="ChEBI" id="CHEBI:18420"/>
    </ligand>
</feature>
<feature type="binding site" evidence="3">
    <location>
        <position position="63"/>
    </location>
    <ligand>
        <name>Mg(2+)</name>
        <dbReference type="ChEBI" id="CHEBI:18420"/>
    </ligand>
</feature>
<feature type="binding site" evidence="3">
    <location>
        <position position="66"/>
    </location>
    <ligand>
        <name>GTP</name>
        <dbReference type="ChEBI" id="CHEBI:37565"/>
    </ligand>
</feature>
<feature type="binding site" evidence="3">
    <location>
        <position position="121"/>
    </location>
    <ligand>
        <name>GTP</name>
        <dbReference type="ChEBI" id="CHEBI:37565"/>
    </ligand>
</feature>
<feature type="binding site" evidence="3">
    <location>
        <position position="122"/>
    </location>
    <ligand>
        <name>GTP</name>
        <dbReference type="ChEBI" id="CHEBI:37565"/>
    </ligand>
</feature>
<feature type="binding site" evidence="3">
    <location>
        <position position="124"/>
    </location>
    <ligand>
        <name>GTP</name>
        <dbReference type="ChEBI" id="CHEBI:37565"/>
    </ligand>
</feature>
<feature type="binding site" evidence="3">
    <location>
        <position position="151"/>
    </location>
    <ligand>
        <name>GTP</name>
        <dbReference type="ChEBI" id="CHEBI:37565"/>
    </ligand>
</feature>
<feature type="binding site" evidence="3">
    <location>
        <position position="152"/>
    </location>
    <ligand>
        <name>GTP</name>
        <dbReference type="ChEBI" id="CHEBI:37565"/>
    </ligand>
</feature>
<feature type="binding site" evidence="3">
    <location>
        <position position="153"/>
    </location>
    <ligand>
        <name>GTP</name>
        <dbReference type="ChEBI" id="CHEBI:37565"/>
    </ligand>
</feature>
<feature type="modified residue" description="N-acetylmethionine" evidence="3">
    <location>
        <position position="1"/>
    </location>
</feature>
<feature type="modified residue" description="Cysteine methyl ester" evidence="4">
    <location>
        <position position="201"/>
    </location>
</feature>
<feature type="lipid moiety-binding region" description="S-geranylgeranyl cysteine" evidence="6">
    <location>
        <position position="200"/>
    </location>
</feature>
<feature type="lipid moiety-binding region" description="S-geranylgeranyl cysteine" evidence="6">
    <location>
        <position position="201"/>
    </location>
</feature>
<feature type="mutagenesis site" description="Abolishes GTP-binding." evidence="9">
    <original>K</original>
    <variation>M</variation>
    <location>
        <position position="21"/>
    </location>
</feature>
<feature type="mutagenesis site" description="Reduced GTPase activity." evidence="9">
    <original>A</original>
    <variation>T</variation>
    <location>
        <position position="65"/>
    </location>
</feature>
<sequence length="201" mass="22163">MNPEYDYLFKLLLIGDSGVGKSCLLLRFADDTYTESYISTIGVDFKIRTIELDGKTIKLQIWDTAGQERFRTVTSSYYRGAHGIIVVYDVTDQESYANVKQWLQEIDRYASENVNKLLVGNKSDLTTKKVVDNTTAKEFADSLGVPFLETSAKNATNVEQAFMTMAAEIKKRMGPGAASGGERPNLKIDSTPVKSASGGCC</sequence>
<protein>
    <recommendedName>
        <fullName>Ras-related protein Rab-1B</fullName>
        <ecNumber evidence="1">3.6.5.2</ecNumber>
    </recommendedName>
</protein>
<organism>
    <name type="scientific">Rattus norvegicus</name>
    <name type="common">Rat</name>
    <dbReference type="NCBI Taxonomy" id="10116"/>
    <lineage>
        <taxon>Eukaryota</taxon>
        <taxon>Metazoa</taxon>
        <taxon>Chordata</taxon>
        <taxon>Craniata</taxon>
        <taxon>Vertebrata</taxon>
        <taxon>Euteleostomi</taxon>
        <taxon>Mammalia</taxon>
        <taxon>Eutheria</taxon>
        <taxon>Euarchontoglires</taxon>
        <taxon>Glires</taxon>
        <taxon>Rodentia</taxon>
        <taxon>Myomorpha</taxon>
        <taxon>Muroidea</taxon>
        <taxon>Muridae</taxon>
        <taxon>Murinae</taxon>
        <taxon>Rattus</taxon>
    </lineage>
</organism>